<protein>
    <recommendedName>
        <fullName evidence="1">Chromosomal replication initiator protein DnaA</fullName>
    </recommendedName>
</protein>
<accession>Q7NKK4</accession>
<sequence length="442" mass="50134">METLWDGILSHLKGRLSRPTFETWIKPATAQQFEQDCLIIRTPNPFARSWLQQHYAGAIAQAGEQVIGRPIQVDFIVSEQSEEALKPVIEREPAPAAPPANVASLNSKYTFSRFVVGANNRMAHVAALAVAEMPGCNYNPLFLCGGVGLGKTHLMQAIGHYRLDIDTRTKIAYVSTERFANELIEAIRRDAMQTFREHYRRVDLLMIDDIQFIEGKEYTQEEFFHTFNALYESGKQIVIASDRPPQLIPRLQERLSSRFSMGLITDIQQPDIETRMAILQKKAEYENMFVPQDVIHHIASAYTTNIRELEGALIRAVAYVSISGLPMTVETISPILSPPRTRGEITDEAILELVCDELKVSAEDMRSDSRRRDISQARQLCMYLLRKYTDLSLPKIGQALGGKDHTTVLYAIDKIEQSKIRDPEVQRLLQRLGNRLEADARH</sequence>
<keyword id="KW-0067">ATP-binding</keyword>
<keyword id="KW-0963">Cytoplasm</keyword>
<keyword id="KW-0235">DNA replication</keyword>
<keyword id="KW-0238">DNA-binding</keyword>
<keyword id="KW-0446">Lipid-binding</keyword>
<keyword id="KW-0547">Nucleotide-binding</keyword>
<keyword id="KW-1185">Reference proteome</keyword>
<name>DNAA_GLOVI</name>
<reference key="1">
    <citation type="journal article" date="2003" name="DNA Res.">
        <title>Complete genome structure of Gloeobacter violaceus PCC 7421, a cyanobacterium that lacks thylakoids.</title>
        <authorList>
            <person name="Nakamura Y."/>
            <person name="Kaneko T."/>
            <person name="Sato S."/>
            <person name="Mimuro M."/>
            <person name="Miyashita H."/>
            <person name="Tsuchiya T."/>
            <person name="Sasamoto S."/>
            <person name="Watanabe A."/>
            <person name="Kawashima K."/>
            <person name="Kishida Y."/>
            <person name="Kiyokawa C."/>
            <person name="Kohara M."/>
            <person name="Matsumoto M."/>
            <person name="Matsuno A."/>
            <person name="Nakazaki N."/>
            <person name="Shimpo S."/>
            <person name="Takeuchi C."/>
            <person name="Yamada M."/>
            <person name="Tabata S."/>
        </authorList>
    </citation>
    <scope>NUCLEOTIDE SEQUENCE [LARGE SCALE GENOMIC DNA]</scope>
    <source>
        <strain>ATCC 29082 / PCC 7421</strain>
    </source>
</reference>
<proteinExistence type="inferred from homology"/>
<gene>
    <name evidence="1" type="primary">dnaA</name>
    <name type="ordered locus">gll1473</name>
</gene>
<evidence type="ECO:0000255" key="1">
    <source>
        <dbReference type="HAMAP-Rule" id="MF_00377"/>
    </source>
</evidence>
<comment type="function">
    <text evidence="1">Plays an essential role in the initiation and regulation of chromosomal replication. ATP-DnaA binds to the origin of replication (oriC) to initiate formation of the DNA replication initiation complex once per cell cycle. Binds the DnaA box (a 9 base pair repeat at the origin) and separates the double-stranded (ds)DNA. Forms a right-handed helical filament on oriC DNA; dsDNA binds to the exterior of the filament while single-stranded (ss)DNA is stabiized in the filament's interior. The ATP-DnaA-oriC complex binds and stabilizes one strand of the AT-rich DNA unwinding element (DUE), permitting loading of DNA polymerase. After initiation quickly degrades to an ADP-DnaA complex that is not apt for DNA replication. Binds acidic phospholipids.</text>
</comment>
<comment type="subunit">
    <text evidence="1">Oligomerizes as a right-handed, spiral filament on DNA at oriC.</text>
</comment>
<comment type="subcellular location">
    <subcellularLocation>
        <location evidence="1">Cytoplasm</location>
    </subcellularLocation>
</comment>
<comment type="domain">
    <text evidence="1">Domain I is involved in oligomerization and binding regulators, domain II is flexibile and of varying length in different bacteria, domain III forms the AAA+ region, while domain IV binds dsDNA.</text>
</comment>
<comment type="similarity">
    <text evidence="1">Belongs to the DnaA family.</text>
</comment>
<dbReference type="EMBL" id="BA000045">
    <property type="protein sequence ID" value="BAC89414.1"/>
    <property type="molecule type" value="Genomic_DNA"/>
</dbReference>
<dbReference type="RefSeq" id="NP_924419.1">
    <property type="nucleotide sequence ID" value="NC_005125.1"/>
</dbReference>
<dbReference type="RefSeq" id="WP_011141473.1">
    <property type="nucleotide sequence ID" value="NC_005125.1"/>
</dbReference>
<dbReference type="SMR" id="Q7NKK4"/>
<dbReference type="FunCoup" id="Q7NKK4">
    <property type="interactions" value="85"/>
</dbReference>
<dbReference type="STRING" id="251221.gene:10758962"/>
<dbReference type="EnsemblBacteria" id="BAC89414">
    <property type="protein sequence ID" value="BAC89414"/>
    <property type="gene ID" value="BAC89414"/>
</dbReference>
<dbReference type="KEGG" id="gvi:gll1473"/>
<dbReference type="PATRIC" id="fig|251221.4.peg.1505"/>
<dbReference type="eggNOG" id="COG0593">
    <property type="taxonomic scope" value="Bacteria"/>
</dbReference>
<dbReference type="HOGENOM" id="CLU_026910_3_1_3"/>
<dbReference type="InParanoid" id="Q7NKK4"/>
<dbReference type="OrthoDB" id="9807019at2"/>
<dbReference type="PhylomeDB" id="Q7NKK4"/>
<dbReference type="Proteomes" id="UP000000557">
    <property type="component" value="Chromosome"/>
</dbReference>
<dbReference type="GO" id="GO:0005737">
    <property type="term" value="C:cytoplasm"/>
    <property type="evidence" value="ECO:0007669"/>
    <property type="project" value="UniProtKB-SubCell"/>
</dbReference>
<dbReference type="GO" id="GO:0005886">
    <property type="term" value="C:plasma membrane"/>
    <property type="evidence" value="ECO:0000318"/>
    <property type="project" value="GO_Central"/>
</dbReference>
<dbReference type="GO" id="GO:0005524">
    <property type="term" value="F:ATP binding"/>
    <property type="evidence" value="ECO:0007669"/>
    <property type="project" value="UniProtKB-UniRule"/>
</dbReference>
<dbReference type="GO" id="GO:0016887">
    <property type="term" value="F:ATP hydrolysis activity"/>
    <property type="evidence" value="ECO:0007669"/>
    <property type="project" value="InterPro"/>
</dbReference>
<dbReference type="GO" id="GO:0003688">
    <property type="term" value="F:DNA replication origin binding"/>
    <property type="evidence" value="ECO:0000318"/>
    <property type="project" value="GO_Central"/>
</dbReference>
<dbReference type="GO" id="GO:0008289">
    <property type="term" value="F:lipid binding"/>
    <property type="evidence" value="ECO:0007669"/>
    <property type="project" value="UniProtKB-KW"/>
</dbReference>
<dbReference type="GO" id="GO:0006260">
    <property type="term" value="P:DNA replication"/>
    <property type="evidence" value="ECO:0000318"/>
    <property type="project" value="GO_Central"/>
</dbReference>
<dbReference type="GO" id="GO:0006270">
    <property type="term" value="P:DNA replication initiation"/>
    <property type="evidence" value="ECO:0000318"/>
    <property type="project" value="GO_Central"/>
</dbReference>
<dbReference type="GO" id="GO:0006275">
    <property type="term" value="P:regulation of DNA replication"/>
    <property type="evidence" value="ECO:0007669"/>
    <property type="project" value="UniProtKB-UniRule"/>
</dbReference>
<dbReference type="CDD" id="cd00009">
    <property type="entry name" value="AAA"/>
    <property type="match status" value="1"/>
</dbReference>
<dbReference type="CDD" id="cd06571">
    <property type="entry name" value="Bac_DnaA_C"/>
    <property type="match status" value="1"/>
</dbReference>
<dbReference type="FunFam" id="3.40.50.300:FF:000668">
    <property type="entry name" value="Chromosomal replication initiator protein DnaA"/>
    <property type="match status" value="1"/>
</dbReference>
<dbReference type="Gene3D" id="1.10.1750.10">
    <property type="match status" value="1"/>
</dbReference>
<dbReference type="Gene3D" id="1.10.8.60">
    <property type="match status" value="1"/>
</dbReference>
<dbReference type="Gene3D" id="3.30.300.180">
    <property type="match status" value="1"/>
</dbReference>
<dbReference type="Gene3D" id="3.40.50.300">
    <property type="entry name" value="P-loop containing nucleotide triphosphate hydrolases"/>
    <property type="match status" value="1"/>
</dbReference>
<dbReference type="HAMAP" id="MF_00377">
    <property type="entry name" value="DnaA_bact"/>
    <property type="match status" value="1"/>
</dbReference>
<dbReference type="InterPro" id="IPR003593">
    <property type="entry name" value="AAA+_ATPase"/>
</dbReference>
<dbReference type="InterPro" id="IPR001957">
    <property type="entry name" value="Chromosome_initiator_DnaA"/>
</dbReference>
<dbReference type="InterPro" id="IPR020591">
    <property type="entry name" value="Chromosome_initiator_DnaA-like"/>
</dbReference>
<dbReference type="InterPro" id="IPR018312">
    <property type="entry name" value="Chromosome_initiator_DnaA_CS"/>
</dbReference>
<dbReference type="InterPro" id="IPR013159">
    <property type="entry name" value="DnaA_C"/>
</dbReference>
<dbReference type="InterPro" id="IPR013317">
    <property type="entry name" value="DnaA_dom"/>
</dbReference>
<dbReference type="InterPro" id="IPR024633">
    <property type="entry name" value="DnaA_N_dom"/>
</dbReference>
<dbReference type="InterPro" id="IPR038454">
    <property type="entry name" value="DnaA_N_sf"/>
</dbReference>
<dbReference type="InterPro" id="IPR027417">
    <property type="entry name" value="P-loop_NTPase"/>
</dbReference>
<dbReference type="InterPro" id="IPR010921">
    <property type="entry name" value="Trp_repressor/repl_initiator"/>
</dbReference>
<dbReference type="NCBIfam" id="TIGR00362">
    <property type="entry name" value="DnaA"/>
    <property type="match status" value="1"/>
</dbReference>
<dbReference type="PANTHER" id="PTHR30050">
    <property type="entry name" value="CHROMOSOMAL REPLICATION INITIATOR PROTEIN DNAA"/>
    <property type="match status" value="1"/>
</dbReference>
<dbReference type="PANTHER" id="PTHR30050:SF2">
    <property type="entry name" value="CHROMOSOMAL REPLICATION INITIATOR PROTEIN DNAA"/>
    <property type="match status" value="1"/>
</dbReference>
<dbReference type="Pfam" id="PF00308">
    <property type="entry name" value="Bac_DnaA"/>
    <property type="match status" value="1"/>
</dbReference>
<dbReference type="Pfam" id="PF08299">
    <property type="entry name" value="Bac_DnaA_C"/>
    <property type="match status" value="1"/>
</dbReference>
<dbReference type="Pfam" id="PF11638">
    <property type="entry name" value="DnaA_N"/>
    <property type="match status" value="1"/>
</dbReference>
<dbReference type="PRINTS" id="PR00051">
    <property type="entry name" value="DNAA"/>
</dbReference>
<dbReference type="SMART" id="SM00382">
    <property type="entry name" value="AAA"/>
    <property type="match status" value="1"/>
</dbReference>
<dbReference type="SMART" id="SM00760">
    <property type="entry name" value="Bac_DnaA_C"/>
    <property type="match status" value="1"/>
</dbReference>
<dbReference type="SUPFAM" id="SSF52540">
    <property type="entry name" value="P-loop containing nucleoside triphosphate hydrolases"/>
    <property type="match status" value="1"/>
</dbReference>
<dbReference type="SUPFAM" id="SSF48295">
    <property type="entry name" value="TrpR-like"/>
    <property type="match status" value="1"/>
</dbReference>
<dbReference type="PROSITE" id="PS01008">
    <property type="entry name" value="DNAA"/>
    <property type="match status" value="1"/>
</dbReference>
<organism>
    <name type="scientific">Gloeobacter violaceus (strain ATCC 29082 / PCC 7421)</name>
    <dbReference type="NCBI Taxonomy" id="251221"/>
    <lineage>
        <taxon>Bacteria</taxon>
        <taxon>Bacillati</taxon>
        <taxon>Cyanobacteriota</taxon>
        <taxon>Cyanophyceae</taxon>
        <taxon>Gloeobacterales</taxon>
        <taxon>Gloeobacteraceae</taxon>
        <taxon>Gloeobacter</taxon>
    </lineage>
</organism>
<feature type="chain" id="PRO_0000114183" description="Chromosomal replication initiator protein DnaA">
    <location>
        <begin position="1"/>
        <end position="442"/>
    </location>
</feature>
<feature type="region of interest" description="Domain I, interacts with DnaA modulators" evidence="1">
    <location>
        <begin position="1"/>
        <end position="69"/>
    </location>
</feature>
<feature type="region of interest" description="Domain II" evidence="1">
    <location>
        <begin position="69"/>
        <end position="103"/>
    </location>
</feature>
<feature type="region of interest" description="Domain III, AAA+ region" evidence="1">
    <location>
        <begin position="104"/>
        <end position="320"/>
    </location>
</feature>
<feature type="region of interest" description="Domain IV, binds dsDNA" evidence="1">
    <location>
        <begin position="321"/>
        <end position="442"/>
    </location>
</feature>
<feature type="binding site" evidence="1">
    <location>
        <position position="148"/>
    </location>
    <ligand>
        <name>ATP</name>
        <dbReference type="ChEBI" id="CHEBI:30616"/>
    </ligand>
</feature>
<feature type="binding site" evidence="1">
    <location>
        <position position="150"/>
    </location>
    <ligand>
        <name>ATP</name>
        <dbReference type="ChEBI" id="CHEBI:30616"/>
    </ligand>
</feature>
<feature type="binding site" evidence="1">
    <location>
        <position position="151"/>
    </location>
    <ligand>
        <name>ATP</name>
        <dbReference type="ChEBI" id="CHEBI:30616"/>
    </ligand>
</feature>
<feature type="binding site" evidence="1">
    <location>
        <position position="152"/>
    </location>
    <ligand>
        <name>ATP</name>
        <dbReference type="ChEBI" id="CHEBI:30616"/>
    </ligand>
</feature>